<protein>
    <recommendedName>
        <fullName evidence="1">Small ribosomal subunit protein uS17</fullName>
    </recommendedName>
    <alternativeName>
        <fullName evidence="2">30S ribosomal protein S17</fullName>
    </alternativeName>
</protein>
<dbReference type="EMBL" id="AM040264">
    <property type="protein sequence ID" value="CAJ11202.1"/>
    <property type="molecule type" value="Genomic_DNA"/>
</dbReference>
<dbReference type="RefSeq" id="WP_002964353.1">
    <property type="nucleotide sequence ID" value="NZ_KN046823.1"/>
</dbReference>
<dbReference type="SMR" id="Q2YRA4"/>
<dbReference type="STRING" id="359391.BAB1_1246"/>
<dbReference type="GeneID" id="97533533"/>
<dbReference type="KEGG" id="bmf:BAB1_1246"/>
<dbReference type="PATRIC" id="fig|359391.11.peg.146"/>
<dbReference type="HOGENOM" id="CLU_073626_1_1_5"/>
<dbReference type="Proteomes" id="UP000002719">
    <property type="component" value="Chromosome I"/>
</dbReference>
<dbReference type="GO" id="GO:0022627">
    <property type="term" value="C:cytosolic small ribosomal subunit"/>
    <property type="evidence" value="ECO:0007669"/>
    <property type="project" value="TreeGrafter"/>
</dbReference>
<dbReference type="GO" id="GO:0019843">
    <property type="term" value="F:rRNA binding"/>
    <property type="evidence" value="ECO:0007669"/>
    <property type="project" value="UniProtKB-UniRule"/>
</dbReference>
<dbReference type="GO" id="GO:0003735">
    <property type="term" value="F:structural constituent of ribosome"/>
    <property type="evidence" value="ECO:0007669"/>
    <property type="project" value="InterPro"/>
</dbReference>
<dbReference type="GO" id="GO:0006412">
    <property type="term" value="P:translation"/>
    <property type="evidence" value="ECO:0007669"/>
    <property type="project" value="UniProtKB-UniRule"/>
</dbReference>
<dbReference type="CDD" id="cd00364">
    <property type="entry name" value="Ribosomal_uS17"/>
    <property type="match status" value="1"/>
</dbReference>
<dbReference type="Gene3D" id="2.40.50.140">
    <property type="entry name" value="Nucleic acid-binding proteins"/>
    <property type="match status" value="1"/>
</dbReference>
<dbReference type="HAMAP" id="MF_01345_B">
    <property type="entry name" value="Ribosomal_uS17_B"/>
    <property type="match status" value="1"/>
</dbReference>
<dbReference type="InterPro" id="IPR012340">
    <property type="entry name" value="NA-bd_OB-fold"/>
</dbReference>
<dbReference type="InterPro" id="IPR000266">
    <property type="entry name" value="Ribosomal_uS17"/>
</dbReference>
<dbReference type="InterPro" id="IPR019984">
    <property type="entry name" value="Ribosomal_uS17_bact/chlr"/>
</dbReference>
<dbReference type="NCBIfam" id="NF004123">
    <property type="entry name" value="PRK05610.1"/>
    <property type="match status" value="1"/>
</dbReference>
<dbReference type="NCBIfam" id="TIGR03635">
    <property type="entry name" value="uS17_bact"/>
    <property type="match status" value="1"/>
</dbReference>
<dbReference type="PANTHER" id="PTHR10744">
    <property type="entry name" value="40S RIBOSOMAL PROTEIN S11 FAMILY MEMBER"/>
    <property type="match status" value="1"/>
</dbReference>
<dbReference type="PANTHER" id="PTHR10744:SF1">
    <property type="entry name" value="SMALL RIBOSOMAL SUBUNIT PROTEIN US17M"/>
    <property type="match status" value="1"/>
</dbReference>
<dbReference type="Pfam" id="PF00366">
    <property type="entry name" value="Ribosomal_S17"/>
    <property type="match status" value="1"/>
</dbReference>
<dbReference type="PRINTS" id="PR00973">
    <property type="entry name" value="RIBOSOMALS17"/>
</dbReference>
<dbReference type="SUPFAM" id="SSF50249">
    <property type="entry name" value="Nucleic acid-binding proteins"/>
    <property type="match status" value="1"/>
</dbReference>
<keyword id="KW-1185">Reference proteome</keyword>
<keyword id="KW-0687">Ribonucleoprotein</keyword>
<keyword id="KW-0689">Ribosomal protein</keyword>
<keyword id="KW-0694">RNA-binding</keyword>
<keyword id="KW-0699">rRNA-binding</keyword>
<proteinExistence type="inferred from homology"/>
<accession>Q2YRA4</accession>
<organism>
    <name type="scientific">Brucella abortus (strain 2308)</name>
    <dbReference type="NCBI Taxonomy" id="359391"/>
    <lineage>
        <taxon>Bacteria</taxon>
        <taxon>Pseudomonadati</taxon>
        <taxon>Pseudomonadota</taxon>
        <taxon>Alphaproteobacteria</taxon>
        <taxon>Hyphomicrobiales</taxon>
        <taxon>Brucellaceae</taxon>
        <taxon>Brucella/Ochrobactrum group</taxon>
        <taxon>Brucella</taxon>
    </lineage>
</organism>
<reference key="1">
    <citation type="journal article" date="2005" name="Infect. Immun.">
        <title>Whole-genome analyses of speciation events in pathogenic Brucellae.</title>
        <authorList>
            <person name="Chain P.S."/>
            <person name="Comerci D.J."/>
            <person name="Tolmasky M.E."/>
            <person name="Larimer F.W."/>
            <person name="Malfatti S.A."/>
            <person name="Vergez L.M."/>
            <person name="Aguero F."/>
            <person name="Land M.L."/>
            <person name="Ugalde R.A."/>
            <person name="Garcia E."/>
        </authorList>
    </citation>
    <scope>NUCLEOTIDE SEQUENCE [LARGE SCALE GENOMIC DNA]</scope>
    <source>
        <strain>2308</strain>
    </source>
</reference>
<comment type="function">
    <text evidence="1">One of the primary rRNA binding proteins, it binds specifically to the 5'-end of 16S ribosomal RNA.</text>
</comment>
<comment type="subunit">
    <text evidence="1">Part of the 30S ribosomal subunit.</text>
</comment>
<comment type="similarity">
    <text evidence="1">Belongs to the universal ribosomal protein uS17 family.</text>
</comment>
<feature type="chain" id="PRO_0000233442" description="Small ribosomal subunit protein uS17">
    <location>
        <begin position="1"/>
        <end position="80"/>
    </location>
</feature>
<gene>
    <name evidence="1" type="primary">rpsQ</name>
    <name type="ordered locus">BAB1_1246</name>
</gene>
<evidence type="ECO:0000255" key="1">
    <source>
        <dbReference type="HAMAP-Rule" id="MF_01345"/>
    </source>
</evidence>
<evidence type="ECO:0000305" key="2"/>
<sequence>MPKRVLQGVVVSDKNDKTVVVKVERRYSHPLLQKTVRQSKKYKAHDENNQFKVGDFVSIQESAPISKDKRWVVLTSEAAG</sequence>
<name>RS17_BRUA2</name>